<comment type="function">
    <text evidence="3 4">Catalyzes the reduction of glutathione disulfide (GSSG) to reduced glutathione (GSH). Constitutes the major mechanism to maintain a high GSH:GSSG ratio in the cytosol (PubMed:16678813). The amount of GSH may affect the determination of cell fate (PubMed:16678813).</text>
</comment>
<comment type="catalytic activity">
    <reaction evidence="3">
        <text>2 glutathione + NADP(+) = glutathione disulfide + NADPH + H(+)</text>
        <dbReference type="Rhea" id="RHEA:11740"/>
        <dbReference type="ChEBI" id="CHEBI:15378"/>
        <dbReference type="ChEBI" id="CHEBI:57783"/>
        <dbReference type="ChEBI" id="CHEBI:57925"/>
        <dbReference type="ChEBI" id="CHEBI:58297"/>
        <dbReference type="ChEBI" id="CHEBI:58349"/>
        <dbReference type="EC" id="1.8.1.7"/>
    </reaction>
    <physiologicalReaction direction="right-to-left" evidence="3">
        <dbReference type="Rhea" id="RHEA:11742"/>
    </physiologicalReaction>
</comment>
<comment type="cofactor">
    <cofactor evidence="1">
        <name>FAD</name>
        <dbReference type="ChEBI" id="CHEBI:57692"/>
    </cofactor>
    <text evidence="1">Binds 1 FAD per subunit.</text>
</comment>
<comment type="subcellular location">
    <subcellularLocation>
        <location evidence="1">Cytoplasm</location>
    </subcellularLocation>
</comment>
<comment type="miscellaneous">
    <text>The active site is a redox-active disulfide bond.</text>
</comment>
<comment type="similarity">
    <text evidence="5">Belongs to the class-I pyridine nucleotide-disulfide oxidoreductase family.</text>
</comment>
<gene>
    <name type="primary">gsr</name>
    <name type="ORF">DDB_G0272754</name>
</gene>
<name>GSHR_DICDI</name>
<evidence type="ECO:0000250" key="1"/>
<evidence type="ECO:0000250" key="2">
    <source>
        <dbReference type="UniProtKB" id="P00390"/>
    </source>
</evidence>
<evidence type="ECO:0000269" key="3">
    <source>
    </source>
</evidence>
<evidence type="ECO:0000303" key="4">
    <source>
    </source>
</evidence>
<evidence type="ECO:0000305" key="5"/>
<reference key="1">
    <citation type="journal article" date="2002" name="Nature">
        <title>Sequence and analysis of chromosome 2 of Dictyostelium discoideum.</title>
        <authorList>
            <person name="Gloeckner G."/>
            <person name="Eichinger L."/>
            <person name="Szafranski K."/>
            <person name="Pachebat J.A."/>
            <person name="Bankier A.T."/>
            <person name="Dear P.H."/>
            <person name="Lehmann R."/>
            <person name="Baumgart C."/>
            <person name="Parra G."/>
            <person name="Abril J.F."/>
            <person name="Guigo R."/>
            <person name="Kumpf K."/>
            <person name="Tunggal B."/>
            <person name="Cox E.C."/>
            <person name="Quail M.A."/>
            <person name="Platzer M."/>
            <person name="Rosenthal A."/>
            <person name="Noegel A.A."/>
        </authorList>
    </citation>
    <scope>NUCLEOTIDE SEQUENCE [LARGE SCALE GENOMIC DNA]</scope>
    <source>
        <strain>AX4</strain>
    </source>
</reference>
<reference key="2">
    <citation type="journal article" date="2005" name="Nature">
        <title>The genome of the social amoeba Dictyostelium discoideum.</title>
        <authorList>
            <person name="Eichinger L."/>
            <person name="Pachebat J.A."/>
            <person name="Gloeckner G."/>
            <person name="Rajandream M.A."/>
            <person name="Sucgang R."/>
            <person name="Berriman M."/>
            <person name="Song J."/>
            <person name="Olsen R."/>
            <person name="Szafranski K."/>
            <person name="Xu Q."/>
            <person name="Tunggal B."/>
            <person name="Kummerfeld S."/>
            <person name="Madera M."/>
            <person name="Konfortov B.A."/>
            <person name="Rivero F."/>
            <person name="Bankier A.T."/>
            <person name="Lehmann R."/>
            <person name="Hamlin N."/>
            <person name="Davies R."/>
            <person name="Gaudet P."/>
            <person name="Fey P."/>
            <person name="Pilcher K."/>
            <person name="Chen G."/>
            <person name="Saunders D."/>
            <person name="Sodergren E.J."/>
            <person name="Davis P."/>
            <person name="Kerhornou A."/>
            <person name="Nie X."/>
            <person name="Hall N."/>
            <person name="Anjard C."/>
            <person name="Hemphill L."/>
            <person name="Bason N."/>
            <person name="Farbrother P."/>
            <person name="Desany B."/>
            <person name="Just E."/>
            <person name="Morio T."/>
            <person name="Rost R."/>
            <person name="Churcher C.M."/>
            <person name="Cooper J."/>
            <person name="Haydock S."/>
            <person name="van Driessche N."/>
            <person name="Cronin A."/>
            <person name="Goodhead I."/>
            <person name="Muzny D.M."/>
            <person name="Mourier T."/>
            <person name="Pain A."/>
            <person name="Lu M."/>
            <person name="Harper D."/>
            <person name="Lindsay R."/>
            <person name="Hauser H."/>
            <person name="James K.D."/>
            <person name="Quiles M."/>
            <person name="Madan Babu M."/>
            <person name="Saito T."/>
            <person name="Buchrieser C."/>
            <person name="Wardroper A."/>
            <person name="Felder M."/>
            <person name="Thangavelu M."/>
            <person name="Johnson D."/>
            <person name="Knights A."/>
            <person name="Loulseged H."/>
            <person name="Mungall K.L."/>
            <person name="Oliver K."/>
            <person name="Price C."/>
            <person name="Quail M.A."/>
            <person name="Urushihara H."/>
            <person name="Hernandez J."/>
            <person name="Rabbinowitsch E."/>
            <person name="Steffen D."/>
            <person name="Sanders M."/>
            <person name="Ma J."/>
            <person name="Kohara Y."/>
            <person name="Sharp S."/>
            <person name="Simmonds M.N."/>
            <person name="Spiegler S."/>
            <person name="Tivey A."/>
            <person name="Sugano S."/>
            <person name="White B."/>
            <person name="Walker D."/>
            <person name="Woodward J.R."/>
            <person name="Winckler T."/>
            <person name="Tanaka Y."/>
            <person name="Shaulsky G."/>
            <person name="Schleicher M."/>
            <person name="Weinstock G.M."/>
            <person name="Rosenthal A."/>
            <person name="Cox E.C."/>
            <person name="Chisholm R.L."/>
            <person name="Gibbs R.A."/>
            <person name="Loomis W.F."/>
            <person name="Platzer M."/>
            <person name="Kay R.R."/>
            <person name="Williams J.G."/>
            <person name="Dear P.H."/>
            <person name="Noegel A.A."/>
            <person name="Barrell B.G."/>
            <person name="Kuspa A."/>
        </authorList>
    </citation>
    <scope>NUCLEOTIDE SEQUENCE [LARGE SCALE GENOMIC DNA]</scope>
    <source>
        <strain>AX4</strain>
    </source>
</reference>
<reference key="3">
    <citation type="journal article" date="2006" name="Dev. Biol.">
        <title>Reduced glutathione levels affect the culmination and cell fate decision in Dictyostelium discoideum.</title>
        <authorList>
            <person name="Choi C.-H."/>
            <person name="Kim B.-J."/>
            <person name="Jeong S.-Y."/>
            <person name="Lee C.-H."/>
            <person name="Kim J.-S."/>
            <person name="Park S.-J."/>
            <person name="Yim H.-S."/>
            <person name="Kang S.-O."/>
        </authorList>
    </citation>
    <scope>FUNCTION</scope>
    <scope>CATALYTIC ACTIVITY</scope>
</reference>
<proteinExistence type="evidence at protein level"/>
<organism>
    <name type="scientific">Dictyostelium discoideum</name>
    <name type="common">Social amoeba</name>
    <dbReference type="NCBI Taxonomy" id="44689"/>
    <lineage>
        <taxon>Eukaryota</taxon>
        <taxon>Amoebozoa</taxon>
        <taxon>Evosea</taxon>
        <taxon>Eumycetozoa</taxon>
        <taxon>Dictyostelia</taxon>
        <taxon>Dictyosteliales</taxon>
        <taxon>Dictyosteliaceae</taxon>
        <taxon>Dictyostelium</taxon>
    </lineage>
</organism>
<keyword id="KW-0963">Cytoplasm</keyword>
<keyword id="KW-1015">Disulfide bond</keyword>
<keyword id="KW-0274">FAD</keyword>
<keyword id="KW-0285">Flavoprotein</keyword>
<keyword id="KW-0521">NADP</keyword>
<keyword id="KW-0560">Oxidoreductase</keyword>
<keyword id="KW-0676">Redox-active center</keyword>
<keyword id="KW-1185">Reference proteome</keyword>
<accession>Q8T137</accession>
<accession>Q558X7</accession>
<dbReference type="EC" id="1.8.1.7" evidence="3"/>
<dbReference type="EMBL" id="AAFI02000008">
    <property type="protein sequence ID" value="EAL71014.1"/>
    <property type="molecule type" value="Genomic_DNA"/>
</dbReference>
<dbReference type="RefSeq" id="XP_644939.1">
    <property type="nucleotide sequence ID" value="XM_639847.1"/>
</dbReference>
<dbReference type="SMR" id="Q8T137"/>
<dbReference type="FunCoup" id="Q8T137">
    <property type="interactions" value="882"/>
</dbReference>
<dbReference type="STRING" id="44689.Q8T137"/>
<dbReference type="PaxDb" id="44689-DDB0231410"/>
<dbReference type="EnsemblProtists" id="EAL71014">
    <property type="protein sequence ID" value="EAL71014"/>
    <property type="gene ID" value="DDB_G0272754"/>
</dbReference>
<dbReference type="GeneID" id="8618618"/>
<dbReference type="KEGG" id="ddi:DDB_G0272754"/>
<dbReference type="dictyBase" id="DDB_G0272754">
    <property type="gene designation" value="gsr"/>
</dbReference>
<dbReference type="VEuPathDB" id="AmoebaDB:DDB_G0272754"/>
<dbReference type="eggNOG" id="KOG0405">
    <property type="taxonomic scope" value="Eukaryota"/>
</dbReference>
<dbReference type="HOGENOM" id="CLU_016755_2_2_1"/>
<dbReference type="InParanoid" id="Q8T137"/>
<dbReference type="OMA" id="MSKHYDY"/>
<dbReference type="PhylomeDB" id="Q8T137"/>
<dbReference type="Reactome" id="R-DDI-3299685">
    <property type="pathway name" value="Detoxification of Reactive Oxygen Species"/>
</dbReference>
<dbReference type="Reactome" id="R-DDI-499943">
    <property type="pathway name" value="Interconversion of nucleotide di- and triphosphates"/>
</dbReference>
<dbReference type="Reactome" id="R-DDI-5628897">
    <property type="pathway name" value="TP53 Regulates Metabolic Genes"/>
</dbReference>
<dbReference type="PRO" id="PR:Q8T137"/>
<dbReference type="Proteomes" id="UP000002195">
    <property type="component" value="Chromosome 2"/>
</dbReference>
<dbReference type="GO" id="GO:0005829">
    <property type="term" value="C:cytosol"/>
    <property type="evidence" value="ECO:0000318"/>
    <property type="project" value="GO_Central"/>
</dbReference>
<dbReference type="GO" id="GO:0005739">
    <property type="term" value="C:mitochondrion"/>
    <property type="evidence" value="ECO:0000318"/>
    <property type="project" value="GO_Central"/>
</dbReference>
<dbReference type="GO" id="GO:0050660">
    <property type="term" value="F:flavin adenine dinucleotide binding"/>
    <property type="evidence" value="ECO:0000318"/>
    <property type="project" value="GO_Central"/>
</dbReference>
<dbReference type="GO" id="GO:0043295">
    <property type="term" value="F:glutathione binding"/>
    <property type="evidence" value="ECO:0000314"/>
    <property type="project" value="dictyBase"/>
</dbReference>
<dbReference type="GO" id="GO:0004362">
    <property type="term" value="F:glutathione-disulfide reductase (NADPH) activity"/>
    <property type="evidence" value="ECO:0000315"/>
    <property type="project" value="dictyBase"/>
</dbReference>
<dbReference type="GO" id="GO:0050661">
    <property type="term" value="F:NADP binding"/>
    <property type="evidence" value="ECO:0000314"/>
    <property type="project" value="dictyBase"/>
</dbReference>
<dbReference type="GO" id="GO:0045454">
    <property type="term" value="P:cell redox homeostasis"/>
    <property type="evidence" value="ECO:0000315"/>
    <property type="project" value="dictyBase"/>
</dbReference>
<dbReference type="GO" id="GO:0034599">
    <property type="term" value="P:cellular response to oxidative stress"/>
    <property type="evidence" value="ECO:0000318"/>
    <property type="project" value="GO_Central"/>
</dbReference>
<dbReference type="GO" id="GO:0031154">
    <property type="term" value="P:culmination involved in sorocarp development"/>
    <property type="evidence" value="ECO:0000315"/>
    <property type="project" value="dictyBase"/>
</dbReference>
<dbReference type="GO" id="GO:0006749">
    <property type="term" value="P:glutathione metabolic process"/>
    <property type="evidence" value="ECO:0000315"/>
    <property type="project" value="dictyBase"/>
</dbReference>
<dbReference type="FunFam" id="3.30.390.30:FF:000003">
    <property type="entry name" value="Glutathione reductase"/>
    <property type="match status" value="1"/>
</dbReference>
<dbReference type="FunFam" id="3.50.50.60:FF:000141">
    <property type="entry name" value="Glutathione reductase"/>
    <property type="match status" value="1"/>
</dbReference>
<dbReference type="Gene3D" id="3.30.390.30">
    <property type="match status" value="1"/>
</dbReference>
<dbReference type="Gene3D" id="3.50.50.60">
    <property type="entry name" value="FAD/NAD(P)-binding domain"/>
    <property type="match status" value="2"/>
</dbReference>
<dbReference type="InterPro" id="IPR036188">
    <property type="entry name" value="FAD/NAD-bd_sf"/>
</dbReference>
<dbReference type="InterPro" id="IPR023753">
    <property type="entry name" value="FAD/NAD-binding_dom"/>
</dbReference>
<dbReference type="InterPro" id="IPR016156">
    <property type="entry name" value="FAD/NAD-linked_Rdtase_dimer_sf"/>
</dbReference>
<dbReference type="InterPro" id="IPR006322">
    <property type="entry name" value="Glutathione_Rdtase_euk/bac"/>
</dbReference>
<dbReference type="InterPro" id="IPR046952">
    <property type="entry name" value="GSHR/TRXR-like"/>
</dbReference>
<dbReference type="InterPro" id="IPR001100">
    <property type="entry name" value="Pyr_nuc-diS_OxRdtase"/>
</dbReference>
<dbReference type="InterPro" id="IPR004099">
    <property type="entry name" value="Pyr_nucl-diS_OxRdtase_dimer"/>
</dbReference>
<dbReference type="InterPro" id="IPR012999">
    <property type="entry name" value="Pyr_OxRdtase_I_AS"/>
</dbReference>
<dbReference type="NCBIfam" id="TIGR01421">
    <property type="entry name" value="gluta_reduc_1"/>
    <property type="match status" value="1"/>
</dbReference>
<dbReference type="NCBIfam" id="NF004776">
    <property type="entry name" value="PRK06116.1"/>
    <property type="match status" value="1"/>
</dbReference>
<dbReference type="PANTHER" id="PTHR42737">
    <property type="entry name" value="GLUTATHIONE REDUCTASE"/>
    <property type="match status" value="1"/>
</dbReference>
<dbReference type="PANTHER" id="PTHR42737:SF2">
    <property type="entry name" value="GLUTATHIONE REDUCTASE"/>
    <property type="match status" value="1"/>
</dbReference>
<dbReference type="Pfam" id="PF07992">
    <property type="entry name" value="Pyr_redox_2"/>
    <property type="match status" value="1"/>
</dbReference>
<dbReference type="Pfam" id="PF02852">
    <property type="entry name" value="Pyr_redox_dim"/>
    <property type="match status" value="1"/>
</dbReference>
<dbReference type="PIRSF" id="PIRSF000350">
    <property type="entry name" value="Mercury_reductase_MerA"/>
    <property type="match status" value="1"/>
</dbReference>
<dbReference type="PRINTS" id="PR00368">
    <property type="entry name" value="FADPNR"/>
</dbReference>
<dbReference type="PRINTS" id="PR00411">
    <property type="entry name" value="PNDRDTASEI"/>
</dbReference>
<dbReference type="SUPFAM" id="SSF51905">
    <property type="entry name" value="FAD/NAD(P)-binding domain"/>
    <property type="match status" value="1"/>
</dbReference>
<dbReference type="SUPFAM" id="SSF55424">
    <property type="entry name" value="FAD/NAD-linked reductases, dimerisation (C-terminal) domain"/>
    <property type="match status" value="1"/>
</dbReference>
<dbReference type="PROSITE" id="PS00076">
    <property type="entry name" value="PYRIDINE_REDOX_1"/>
    <property type="match status" value="1"/>
</dbReference>
<protein>
    <recommendedName>
        <fullName evidence="4">Glutathione reductase</fullName>
        <shortName>GR</shortName>
        <shortName>GRase</shortName>
        <shortName evidence="4">GSR</shortName>
        <ecNumber evidence="3">1.8.1.7</ecNumber>
    </recommendedName>
</protein>
<sequence>MSSTNHFTYLVLGAGSGGIASARRAAKHLNAKGNGDRIGIVEVTRPGGTCVNVGCVPKKVMWNTSFIKEMINAAPSYGFDFGGQQVKFNWPTIKKARDEYIKRLNGIYDSNLAKDNIVRINGYGRFSGPKEIQVNGANGEKYTADHILIAAGGRPTVPDVPGKELGITSDGFFELEDLPKSTLVVGAGYIAVELAGVLHSLGSETTMVIRQKQFLRTFDEMLHTTLLKQMTDDGVKFVTEASIKSLERDVDGKRIIATTNAGVKLPPVECVIWAIGRVPNTDDLGIDKAGIQLTEQSGFIKVDEFQNTNVPGVHAVGDICGNFLLTPVAIAAGRRLSERLFNGKSDLKFEYENVATVVFSHPPIGTVGLTEQEAITKYGTENIKCYNTSFINMFYSVQVHKVRTSMKLVCLGKEEKVIGLHIIGDGCDEIIQGFAVAVKMGCTKWDLDNTCAIHPTSAEELVTMV</sequence>
<feature type="chain" id="PRO_0000327610" description="Glutathione reductase">
    <location>
        <begin position="1"/>
        <end position="465"/>
    </location>
</feature>
<feature type="active site" description="Proton acceptor" evidence="2">
    <location>
        <position position="454"/>
    </location>
</feature>
<feature type="binding site" evidence="2">
    <location>
        <position position="16"/>
    </location>
    <ligand>
        <name>FAD</name>
        <dbReference type="ChEBI" id="CHEBI:57692"/>
    </ligand>
</feature>
<feature type="binding site" evidence="2">
    <location>
        <position position="16"/>
    </location>
    <ligand>
        <name>glutathione</name>
        <dbReference type="ChEBI" id="CHEBI:57925"/>
    </ligand>
</feature>
<feature type="binding site" evidence="2">
    <location>
        <position position="17"/>
    </location>
    <ligand>
        <name>FAD</name>
        <dbReference type="ChEBI" id="CHEBI:57692"/>
    </ligand>
</feature>
<feature type="binding site" evidence="2">
    <location>
        <position position="23"/>
    </location>
    <ligand>
        <name>glutathione</name>
        <dbReference type="ChEBI" id="CHEBI:57925"/>
    </ligand>
</feature>
<feature type="binding site" evidence="2">
    <location>
        <position position="42"/>
    </location>
    <ligand>
        <name>FAD</name>
        <dbReference type="ChEBI" id="CHEBI:57692"/>
    </ligand>
</feature>
<feature type="binding site" evidence="2">
    <location>
        <position position="49"/>
    </location>
    <ligand>
        <name>FAD</name>
        <dbReference type="ChEBI" id="CHEBI:57692"/>
    </ligand>
</feature>
<feature type="binding site" evidence="2">
    <location>
        <position position="50"/>
    </location>
    <ligand>
        <name>FAD</name>
        <dbReference type="ChEBI" id="CHEBI:57692"/>
    </ligand>
</feature>
<feature type="binding site" evidence="2">
    <location>
        <position position="58"/>
    </location>
    <ligand>
        <name>FAD</name>
        <dbReference type="ChEBI" id="CHEBI:57692"/>
    </ligand>
</feature>
<feature type="binding site" evidence="2">
    <location>
        <position position="108"/>
    </location>
    <ligand>
        <name>glutathione</name>
        <dbReference type="ChEBI" id="CHEBI:57925"/>
    </ligand>
</feature>
<feature type="binding site" evidence="2">
    <location>
        <position position="124"/>
    </location>
    <ligand>
        <name>FAD</name>
        <dbReference type="ChEBI" id="CHEBI:57692"/>
    </ligand>
</feature>
<feature type="binding site" evidence="2">
    <location>
        <position position="187"/>
    </location>
    <ligand>
        <name>NADP(+)</name>
        <dbReference type="ChEBI" id="CHEBI:58349"/>
    </ligand>
</feature>
<feature type="binding site" evidence="2">
    <location>
        <position position="190"/>
    </location>
    <ligand>
        <name>NADP(+)</name>
        <dbReference type="ChEBI" id="CHEBI:58349"/>
    </ligand>
</feature>
<feature type="binding site" evidence="2">
    <location>
        <position position="193"/>
    </location>
    <ligand>
        <name>NADP(+)</name>
        <dbReference type="ChEBI" id="CHEBI:58349"/>
    </ligand>
</feature>
<feature type="binding site" evidence="2">
    <location>
        <position position="210"/>
    </location>
    <ligand>
        <name>NADP(+)</name>
        <dbReference type="ChEBI" id="CHEBI:58349"/>
    </ligand>
</feature>
<feature type="binding site" evidence="2">
    <location>
        <position position="216"/>
    </location>
    <ligand>
        <name>NADP(+)</name>
        <dbReference type="ChEBI" id="CHEBI:58349"/>
    </ligand>
</feature>
<feature type="binding site" evidence="2">
    <location>
        <position position="276"/>
    </location>
    <ligand>
        <name>NADP(+)</name>
        <dbReference type="ChEBI" id="CHEBI:58349"/>
    </ligand>
</feature>
<feature type="binding site" evidence="2">
    <location>
        <position position="318"/>
    </location>
    <ligand>
        <name>FAD</name>
        <dbReference type="ChEBI" id="CHEBI:57692"/>
    </ligand>
</feature>
<feature type="binding site" evidence="2">
    <location>
        <position position="324"/>
    </location>
    <ligand>
        <name>NADP(+)</name>
        <dbReference type="ChEBI" id="CHEBI:58349"/>
    </ligand>
</feature>
<feature type="binding site" evidence="2">
    <location>
        <position position="326"/>
    </location>
    <ligand>
        <name>FAD</name>
        <dbReference type="ChEBI" id="CHEBI:57692"/>
    </ligand>
</feature>
<feature type="binding site" evidence="2">
    <location>
        <position position="334"/>
    </location>
    <ligand>
        <name>glutathione</name>
        <dbReference type="ChEBI" id="CHEBI:57925"/>
    </ligand>
</feature>
<feature type="binding site" evidence="2">
    <location>
        <position position="357"/>
    </location>
    <ligand>
        <name>NADP(+)</name>
        <dbReference type="ChEBI" id="CHEBI:58349"/>
    </ligand>
</feature>
<feature type="binding site" evidence="2">
    <location>
        <position position="454"/>
    </location>
    <ligand>
        <name>FAD</name>
        <dbReference type="ChEBI" id="CHEBI:57692"/>
    </ligand>
</feature>
<feature type="disulfide bond" description="Redox-active" evidence="2">
    <location>
        <begin position="50"/>
        <end position="55"/>
    </location>
</feature>